<proteinExistence type="inferred from homology"/>
<protein>
    <recommendedName>
        <fullName>Citrate lyase subunit beta</fullName>
        <shortName>Citrase beta chain</shortName>
        <ecNumber>4.1.3.6</ecNumber>
    </recommendedName>
    <alternativeName>
        <fullName>Citrate (pro-3S)-lyase subunit beta</fullName>
    </alternativeName>
    <alternativeName>
        <fullName>Citryl-CoA lyase subunit</fullName>
        <ecNumber>4.1.3.34</ecNumber>
    </alternativeName>
</protein>
<accession>P0A9I2</accession>
<accession>O54335</accession>
<accession>P77770</accession>
<keyword id="KW-0963">Cytoplasm</keyword>
<keyword id="KW-0456">Lyase</keyword>
<keyword id="KW-0460">Magnesium</keyword>
<keyword id="KW-0479">Metal-binding</keyword>
<keyword id="KW-1185">Reference proteome</keyword>
<dbReference type="EC" id="4.1.3.6"/>
<dbReference type="EC" id="4.1.3.34"/>
<dbReference type="EMBL" id="AE014075">
    <property type="protein sequence ID" value="AAN79181.1"/>
    <property type="status" value="ALT_INIT"/>
    <property type="molecule type" value="Genomic_DNA"/>
</dbReference>
<dbReference type="RefSeq" id="WP_000622357.1">
    <property type="nucleotide sequence ID" value="NZ_CP051263.1"/>
</dbReference>
<dbReference type="SMR" id="P0A9I2"/>
<dbReference type="STRING" id="199310.c0706"/>
<dbReference type="GeneID" id="93776869"/>
<dbReference type="KEGG" id="ecc:c0706"/>
<dbReference type="eggNOG" id="COG2301">
    <property type="taxonomic scope" value="Bacteria"/>
</dbReference>
<dbReference type="HOGENOM" id="CLU_044864_0_0_6"/>
<dbReference type="Proteomes" id="UP000001410">
    <property type="component" value="Chromosome"/>
</dbReference>
<dbReference type="GO" id="GO:0009346">
    <property type="term" value="C:ATP-independent citrate lyase complex"/>
    <property type="evidence" value="ECO:0007669"/>
    <property type="project" value="InterPro"/>
</dbReference>
<dbReference type="GO" id="GO:0005737">
    <property type="term" value="C:cytoplasm"/>
    <property type="evidence" value="ECO:0007669"/>
    <property type="project" value="UniProtKB-SubCell"/>
</dbReference>
<dbReference type="GO" id="GO:0008815">
    <property type="term" value="F:citrate (pro-3S)-lyase activity"/>
    <property type="evidence" value="ECO:0007669"/>
    <property type="project" value="UniProtKB-EC"/>
</dbReference>
<dbReference type="GO" id="GO:0008816">
    <property type="term" value="F:citryl-CoA lyase activity"/>
    <property type="evidence" value="ECO:0007669"/>
    <property type="project" value="UniProtKB-EC"/>
</dbReference>
<dbReference type="GO" id="GO:0000287">
    <property type="term" value="F:magnesium ion binding"/>
    <property type="evidence" value="ECO:0007669"/>
    <property type="project" value="TreeGrafter"/>
</dbReference>
<dbReference type="GO" id="GO:0006084">
    <property type="term" value="P:acetyl-CoA metabolic process"/>
    <property type="evidence" value="ECO:0007669"/>
    <property type="project" value="InterPro"/>
</dbReference>
<dbReference type="GO" id="GO:0006107">
    <property type="term" value="P:oxaloacetate metabolic process"/>
    <property type="evidence" value="ECO:0007669"/>
    <property type="project" value="TreeGrafter"/>
</dbReference>
<dbReference type="FunFam" id="3.20.20.60:FF:000008">
    <property type="entry name" value="Citrate (Pro-3S)-lyase subunit beta"/>
    <property type="match status" value="1"/>
</dbReference>
<dbReference type="Gene3D" id="3.20.20.60">
    <property type="entry name" value="Phosphoenolpyruvate-binding domains"/>
    <property type="match status" value="1"/>
</dbReference>
<dbReference type="InterPro" id="IPR005000">
    <property type="entry name" value="Aldolase/citrate-lyase_domain"/>
</dbReference>
<dbReference type="InterPro" id="IPR011206">
    <property type="entry name" value="Citrate_lyase_beta/mcl1/mcl2"/>
</dbReference>
<dbReference type="InterPro" id="IPR006475">
    <property type="entry name" value="Citrate_lyase_beta_bac"/>
</dbReference>
<dbReference type="InterPro" id="IPR015813">
    <property type="entry name" value="Pyrv/PenolPyrv_kinase-like_dom"/>
</dbReference>
<dbReference type="InterPro" id="IPR040442">
    <property type="entry name" value="Pyrv_kinase-like_dom_sf"/>
</dbReference>
<dbReference type="NCBIfam" id="TIGR01588">
    <property type="entry name" value="citE"/>
    <property type="match status" value="1"/>
</dbReference>
<dbReference type="PANTHER" id="PTHR32308:SF10">
    <property type="entry name" value="CITRATE LYASE SUBUNIT BETA"/>
    <property type="match status" value="1"/>
</dbReference>
<dbReference type="PANTHER" id="PTHR32308">
    <property type="entry name" value="LYASE BETA SUBUNIT, PUTATIVE (AFU_ORTHOLOGUE AFUA_4G13030)-RELATED"/>
    <property type="match status" value="1"/>
</dbReference>
<dbReference type="Pfam" id="PF03328">
    <property type="entry name" value="HpcH_HpaI"/>
    <property type="match status" value="1"/>
</dbReference>
<dbReference type="PIRSF" id="PIRSF015582">
    <property type="entry name" value="Cit_lyase_B"/>
    <property type="match status" value="1"/>
</dbReference>
<dbReference type="SUPFAM" id="SSF51621">
    <property type="entry name" value="Phosphoenolpyruvate/pyruvate domain"/>
    <property type="match status" value="1"/>
</dbReference>
<name>CITE_ECOL6</name>
<feature type="chain" id="PRO_0000089756" description="Citrate lyase subunit beta">
    <location>
        <begin position="1"/>
        <end position="302"/>
    </location>
</feature>
<feature type="binding site" evidence="1">
    <location>
        <position position="76"/>
    </location>
    <ligand>
        <name>substrate</name>
    </ligand>
</feature>
<feature type="binding site" evidence="1">
    <location>
        <position position="139"/>
    </location>
    <ligand>
        <name>Mg(2+)</name>
        <dbReference type="ChEBI" id="CHEBI:18420"/>
    </ligand>
</feature>
<feature type="binding site" evidence="1">
    <location>
        <position position="139"/>
    </location>
    <ligand>
        <name>substrate</name>
    </ligand>
</feature>
<feature type="binding site" evidence="1">
    <location>
        <position position="166"/>
    </location>
    <ligand>
        <name>Mg(2+)</name>
        <dbReference type="ChEBI" id="CHEBI:18420"/>
    </ligand>
</feature>
<comment type="function">
    <text evidence="1">Represents a citryl-ACP lyase.</text>
</comment>
<comment type="catalytic activity">
    <reaction>
        <text>citrate = oxaloacetate + acetate</text>
        <dbReference type="Rhea" id="RHEA:10760"/>
        <dbReference type="ChEBI" id="CHEBI:16452"/>
        <dbReference type="ChEBI" id="CHEBI:16947"/>
        <dbReference type="ChEBI" id="CHEBI:30089"/>
        <dbReference type="EC" id="4.1.3.6"/>
    </reaction>
</comment>
<comment type="catalytic activity">
    <reaction>
        <text>(3S)-citryl-CoA = oxaloacetate + acetyl-CoA</text>
        <dbReference type="Rhea" id="RHEA:20812"/>
        <dbReference type="ChEBI" id="CHEBI:16452"/>
        <dbReference type="ChEBI" id="CHEBI:57288"/>
        <dbReference type="ChEBI" id="CHEBI:57321"/>
        <dbReference type="EC" id="4.1.3.34"/>
    </reaction>
</comment>
<comment type="cofactor">
    <cofactor evidence="1">
        <name>Mg(2+)</name>
        <dbReference type="ChEBI" id="CHEBI:18420"/>
    </cofactor>
    <text evidence="1">Binds 1 Mg(2+) ion per subunit.</text>
</comment>
<comment type="subunit">
    <text evidence="1">Oligomer with a subunit composition of (alpha,beta,gamma)6.</text>
</comment>
<comment type="subcellular location">
    <subcellularLocation>
        <location evidence="2">Cytoplasm</location>
    </subcellularLocation>
</comment>
<comment type="similarity">
    <text evidence="2">Belongs to the HpcH/HpaI aldolase family. Citrate lyase beta subunit subfamily.</text>
</comment>
<comment type="sequence caution" evidence="2">
    <conflict type="erroneous initiation">
        <sequence resource="EMBL-CDS" id="AAN79181"/>
    </conflict>
</comment>
<sequence>MISASLQQRKTRTRRSMLFVPGANAAMVSNSFIYPADALMFDLEDSVALREKDTARRMVYHALQHPLYRDIETIVRVNALDSEWGVNDLEAVVRGGADVVRLPKTDTAQDVLDIEKEILRIEKACGREPGSTGLLAAIESPLGITRAVEIAHASERLIGIALGAEDYVRNLRTERSPEGTELLFARCSILQAARSAGIQAFDTVYSDANNEAGFLQEAAHIKQLGFDGKSLINPRQIDLLHNLYAPTQKEVDHARRVVEAAEAAAREGLGVVSLNGKMVDGPVIDRARLVLSRAELSGIREE</sequence>
<gene>
    <name type="primary">citE</name>
    <name type="ordered locus">c0706</name>
</gene>
<reference key="1">
    <citation type="journal article" date="2002" name="Proc. Natl. Acad. Sci. U.S.A.">
        <title>Extensive mosaic structure revealed by the complete genome sequence of uropathogenic Escherichia coli.</title>
        <authorList>
            <person name="Welch R.A."/>
            <person name="Burland V."/>
            <person name="Plunkett G. III"/>
            <person name="Redford P."/>
            <person name="Roesch P."/>
            <person name="Rasko D."/>
            <person name="Buckles E.L."/>
            <person name="Liou S.-R."/>
            <person name="Boutin A."/>
            <person name="Hackett J."/>
            <person name="Stroud D."/>
            <person name="Mayhew G.F."/>
            <person name="Rose D.J."/>
            <person name="Zhou S."/>
            <person name="Schwartz D.C."/>
            <person name="Perna N.T."/>
            <person name="Mobley H.L.T."/>
            <person name="Donnenberg M.S."/>
            <person name="Blattner F.R."/>
        </authorList>
    </citation>
    <scope>NUCLEOTIDE SEQUENCE [LARGE SCALE GENOMIC DNA]</scope>
    <source>
        <strain>CFT073 / ATCC 700928 / UPEC</strain>
    </source>
</reference>
<organism>
    <name type="scientific">Escherichia coli O6:H1 (strain CFT073 / ATCC 700928 / UPEC)</name>
    <dbReference type="NCBI Taxonomy" id="199310"/>
    <lineage>
        <taxon>Bacteria</taxon>
        <taxon>Pseudomonadati</taxon>
        <taxon>Pseudomonadota</taxon>
        <taxon>Gammaproteobacteria</taxon>
        <taxon>Enterobacterales</taxon>
        <taxon>Enterobacteriaceae</taxon>
        <taxon>Escherichia</taxon>
    </lineage>
</organism>
<evidence type="ECO:0000250" key="1"/>
<evidence type="ECO:0000305" key="2"/>